<sequence>MHTPIGVKPVAGSKEWREAWQKRAFAHISNGYKYIYIAIDSPEIFLLVCSLIRI</sequence>
<organism>
    <name type="scientific">Escherichia coli (strain K12)</name>
    <dbReference type="NCBI Taxonomy" id="83333"/>
    <lineage>
        <taxon>Bacteria</taxon>
        <taxon>Pseudomonadati</taxon>
        <taxon>Pseudomonadota</taxon>
        <taxon>Gammaproteobacteria</taxon>
        <taxon>Enterobacterales</taxon>
        <taxon>Enterobacteriaceae</taxon>
        <taxon>Escherichia</taxon>
    </lineage>
</organism>
<gene>
    <name type="primary">yojO</name>
    <name type="ordered locus">b4604</name>
</gene>
<reference key="1">
    <citation type="journal article" date="1997" name="Science">
        <title>The complete genome sequence of Escherichia coli K-12.</title>
        <authorList>
            <person name="Blattner F.R."/>
            <person name="Plunkett G. III"/>
            <person name="Bloch C.A."/>
            <person name="Perna N.T."/>
            <person name="Burland V."/>
            <person name="Riley M."/>
            <person name="Collado-Vides J."/>
            <person name="Glasner J.D."/>
            <person name="Rode C.K."/>
            <person name="Mayhew G.F."/>
            <person name="Gregor J."/>
            <person name="Davis N.W."/>
            <person name="Kirkpatrick H.A."/>
            <person name="Goeden M.A."/>
            <person name="Rose D.J."/>
            <person name="Mau B."/>
            <person name="Shao Y."/>
        </authorList>
    </citation>
    <scope>NUCLEOTIDE SEQUENCE [LARGE SCALE GENOMIC DNA]</scope>
    <source>
        <strain>K12 / MG1655 / ATCC 47076</strain>
    </source>
</reference>
<dbReference type="EMBL" id="U00096">
    <property type="protein sequence ID" value="AYC08229.1"/>
    <property type="molecule type" value="Genomic_DNA"/>
</dbReference>
<dbReference type="RefSeq" id="WP_001310984.1">
    <property type="nucleotide sequence ID" value="NZ_SSZK01000027.1"/>
</dbReference>
<dbReference type="EnsemblBacteria" id="AYC08229">
    <property type="protein sequence ID" value="AYC08229"/>
    <property type="gene ID" value="b4604"/>
</dbReference>
<dbReference type="KEGG" id="ecoc:C3026_12340"/>
<dbReference type="PATRIC" id="fig|83333.103.peg.3084"/>
<dbReference type="InParanoid" id="A5A619"/>
<dbReference type="OMA" id="HTYIAIN"/>
<dbReference type="BioCyc" id="EcoCyc:MONOMER0-2823"/>
<dbReference type="PRO" id="PR:A5A619"/>
<dbReference type="Proteomes" id="UP000000625">
    <property type="component" value="Chromosome"/>
</dbReference>
<comment type="similarity">
    <text evidence="1">Belongs to the YojO family.</text>
</comment>
<keyword id="KW-1185">Reference proteome</keyword>
<protein>
    <recommendedName>
        <fullName>Protein YojO</fullName>
    </recommendedName>
</protein>
<evidence type="ECO:0000305" key="1"/>
<proteinExistence type="inferred from homology"/>
<name>YOJO_ECOLI</name>
<feature type="chain" id="PRO_0000311791" description="Protein YojO">
    <location>
        <begin position="1"/>
        <end position="54"/>
    </location>
</feature>
<accession>A5A619</accession>
<accession>A0A385XJK9</accession>